<comment type="similarity">
    <text evidence="1">Belongs to the bacterial ribosomal protein bL33 family.</text>
</comment>
<protein>
    <recommendedName>
        <fullName evidence="1">Large ribosomal subunit protein bL33</fullName>
    </recommendedName>
    <alternativeName>
        <fullName evidence="2">50S ribosomal protein L33</fullName>
    </alternativeName>
</protein>
<name>RL33_BORHD</name>
<dbReference type="EMBL" id="CP000048">
    <property type="protein sequence ID" value="AAX16905.1"/>
    <property type="molecule type" value="Genomic_DNA"/>
</dbReference>
<dbReference type="RefSeq" id="WP_011772345.1">
    <property type="nucleotide sequence ID" value="NZ_CP073136.1"/>
</dbReference>
<dbReference type="SMR" id="B2S099"/>
<dbReference type="GeneID" id="71843203"/>
<dbReference type="KEGG" id="bhr:BH0396"/>
<dbReference type="HOGENOM" id="CLU_190949_0_2_12"/>
<dbReference type="Proteomes" id="UP000008834">
    <property type="component" value="Chromosome"/>
</dbReference>
<dbReference type="GO" id="GO:0005737">
    <property type="term" value="C:cytoplasm"/>
    <property type="evidence" value="ECO:0007669"/>
    <property type="project" value="UniProtKB-ARBA"/>
</dbReference>
<dbReference type="GO" id="GO:1990904">
    <property type="term" value="C:ribonucleoprotein complex"/>
    <property type="evidence" value="ECO:0007669"/>
    <property type="project" value="UniProtKB-KW"/>
</dbReference>
<dbReference type="GO" id="GO:0005840">
    <property type="term" value="C:ribosome"/>
    <property type="evidence" value="ECO:0007669"/>
    <property type="project" value="UniProtKB-KW"/>
</dbReference>
<dbReference type="GO" id="GO:0003735">
    <property type="term" value="F:structural constituent of ribosome"/>
    <property type="evidence" value="ECO:0007669"/>
    <property type="project" value="InterPro"/>
</dbReference>
<dbReference type="GO" id="GO:0006412">
    <property type="term" value="P:translation"/>
    <property type="evidence" value="ECO:0007669"/>
    <property type="project" value="UniProtKB-UniRule"/>
</dbReference>
<dbReference type="Gene3D" id="2.20.28.120">
    <property type="entry name" value="Ribosomal protein L33"/>
    <property type="match status" value="1"/>
</dbReference>
<dbReference type="HAMAP" id="MF_00294">
    <property type="entry name" value="Ribosomal_bL33"/>
    <property type="match status" value="1"/>
</dbReference>
<dbReference type="InterPro" id="IPR001705">
    <property type="entry name" value="Ribosomal_bL33"/>
</dbReference>
<dbReference type="InterPro" id="IPR018264">
    <property type="entry name" value="Ribosomal_bL33_CS"/>
</dbReference>
<dbReference type="InterPro" id="IPR038584">
    <property type="entry name" value="Ribosomal_bL33_sf"/>
</dbReference>
<dbReference type="InterPro" id="IPR011332">
    <property type="entry name" value="Ribosomal_zn-bd"/>
</dbReference>
<dbReference type="NCBIfam" id="NF001764">
    <property type="entry name" value="PRK00504.1"/>
    <property type="match status" value="1"/>
</dbReference>
<dbReference type="NCBIfam" id="NF001860">
    <property type="entry name" value="PRK00595.1"/>
    <property type="match status" value="1"/>
</dbReference>
<dbReference type="NCBIfam" id="TIGR01023">
    <property type="entry name" value="rpmG_bact"/>
    <property type="match status" value="1"/>
</dbReference>
<dbReference type="PANTHER" id="PTHR43168">
    <property type="entry name" value="50S RIBOSOMAL PROTEIN L33, CHLOROPLASTIC"/>
    <property type="match status" value="1"/>
</dbReference>
<dbReference type="PANTHER" id="PTHR43168:SF2">
    <property type="entry name" value="LARGE RIBOSOMAL SUBUNIT PROTEIN BL33C"/>
    <property type="match status" value="1"/>
</dbReference>
<dbReference type="Pfam" id="PF00471">
    <property type="entry name" value="Ribosomal_L33"/>
    <property type="match status" value="1"/>
</dbReference>
<dbReference type="SUPFAM" id="SSF57829">
    <property type="entry name" value="Zn-binding ribosomal proteins"/>
    <property type="match status" value="1"/>
</dbReference>
<dbReference type="PROSITE" id="PS00582">
    <property type="entry name" value="RIBOSOMAL_L33"/>
    <property type="match status" value="1"/>
</dbReference>
<feature type="chain" id="PRO_1000115097" description="Large ribosomal subunit protein bL33">
    <location>
        <begin position="1"/>
        <end position="59"/>
    </location>
</feature>
<evidence type="ECO:0000255" key="1">
    <source>
        <dbReference type="HAMAP-Rule" id="MF_00294"/>
    </source>
</evidence>
<evidence type="ECO:0000305" key="2"/>
<keyword id="KW-0687">Ribonucleoprotein</keyword>
<keyword id="KW-0689">Ribosomal protein</keyword>
<accession>B2S099</accession>
<organism>
    <name type="scientific">Borrelia hermsii (strain HS1 / DAH)</name>
    <dbReference type="NCBI Taxonomy" id="314723"/>
    <lineage>
        <taxon>Bacteria</taxon>
        <taxon>Pseudomonadati</taxon>
        <taxon>Spirochaetota</taxon>
        <taxon>Spirochaetia</taxon>
        <taxon>Spirochaetales</taxon>
        <taxon>Borreliaceae</taxon>
        <taxon>Borrelia</taxon>
    </lineage>
</organism>
<gene>
    <name evidence="1" type="primary">rpmG</name>
    <name type="ordered locus">BH0396</name>
</gene>
<reference key="1">
    <citation type="submission" date="2004-12" db="EMBL/GenBank/DDBJ databases">
        <title>The genome sequence of Borrelia hermsii and Borrelia turicatae: comparative analysis of two agents of endemic N. America relapsing fever.</title>
        <authorList>
            <person name="Porcella S.F."/>
            <person name="Raffel S.J."/>
            <person name="Schrumpf M.E."/>
            <person name="Montgomery B."/>
            <person name="Smith T."/>
            <person name="Schwan T.G."/>
        </authorList>
    </citation>
    <scope>NUCLEOTIDE SEQUENCE [LARGE SCALE GENOMIC DNA]</scope>
    <source>
        <strain>HS1 / DAH</strain>
    </source>
</reference>
<proteinExistence type="inferred from homology"/>
<sequence length="59" mass="6855">MGKKKGKGAVELIALVCEETGIRNYTTTKNRRNKQEKLELMKYCPILRKHTLHKEGKIK</sequence>